<gene>
    <name type="primary">his-11</name>
    <name type="ORF">ZK131.5</name>
</gene>
<gene>
    <name type="primary">his-15</name>
    <name type="ORF">ZK131.9</name>
</gene>
<gene>
    <name type="primary">his-29</name>
    <name type="ORF">F35H10.11</name>
</gene>
<gene>
    <name type="primary">his-34</name>
    <name type="ORF">F17E9.9</name>
</gene>
<gene>
    <name type="primary">his-44</name>
    <name type="ORF">F08G2.1</name>
</gene>
<reference key="1">
    <citation type="journal article" date="1989" name="J. Mol. Biol.">
        <title>Nucleotide sequences of Caenorhabditis elegans core histone genes. Genes for different histone classes share common flanking sequence elements.</title>
        <authorList>
            <person name="Roberts S.B."/>
            <person name="Emmons S.W."/>
            <person name="Childs G."/>
        </authorList>
    </citation>
    <scope>NUCLEOTIDE SEQUENCE [GENOMIC DNA]</scope>
</reference>
<reference key="2">
    <citation type="journal article" date="1998" name="Science">
        <title>Genome sequence of the nematode C. elegans: a platform for investigating biology.</title>
        <authorList>
            <consortium name="The C. elegans sequencing consortium"/>
        </authorList>
    </citation>
    <scope>NUCLEOTIDE SEQUENCE [LARGE SCALE GENOMIC DNA]</scope>
    <source>
        <strain>Bristol N2</strain>
    </source>
</reference>
<reference key="3">
    <citation type="journal article" date="1986" name="Biochem. J.">
        <title>Multiple forms of histone H2B from the nematode Caenorhabditis elegans.</title>
        <authorList>
            <person name="Vanfleteren J.R."/>
            <person name="van Bun S.M."/>
            <person name="Delcambe L.L."/>
            <person name="van Beeumen J.J."/>
        </authorList>
    </citation>
    <scope>PROTEIN SEQUENCE OF 2-122</scope>
</reference>
<reference key="4">
    <citation type="journal article" date="1989" name="FEBS Lett.">
        <title>The histones of Caenorhabditis elegans: no evidence of stage-specific isoforms. An overview.</title>
        <authorList>
            <person name="Vanfleteren J.R."/>
            <person name="van Bun S.M."/>
            <person name="van Beeumen J.J."/>
        </authorList>
    </citation>
    <scope>PARTIAL PROTEIN SEQUENCE</scope>
</reference>
<comment type="function">
    <text>Core component of nucleosome. Nucleosomes wrap and compact DNA into chromatin, limiting DNA accessibility to the cellular machineries which require DNA as a template. Histones thereby play a central role in transcription regulation, DNA repair, DNA replication and chromosomal stability. DNA accessibility is regulated via a complex set of post-translational modifications of histones, also called histone code, and nucleosome remodeling.</text>
</comment>
<comment type="subunit">
    <text>The nucleosome is a histone octamer containing two molecules each of H2A, H2B, H3 and H4 assembled in one H3-H4 heterotetramer and two H2A-H2B heterodimers. The octamer wraps approximately 147 bp of DNA.</text>
</comment>
<comment type="subcellular location">
    <subcellularLocation>
        <location>Nucleus</location>
    </subcellularLocation>
    <subcellularLocation>
        <location>Chromosome</location>
    </subcellularLocation>
</comment>
<comment type="PTM">
    <text evidence="1">Monoubiquitination of Lys-117 gives a specific tag for epigenetic transcriptional activation and is also prerequisite for histone H3 'Lys-4' and 'Lys-79' methylation.</text>
</comment>
<comment type="PTM">
    <text evidence="1">GlcNAcylation at Ser-109 promotes monoubiquitination of Lys-117. It fluctuates in response to extracellular glucose, and associates with transcribed genes (By similarity).</text>
</comment>
<comment type="similarity">
    <text evidence="4">Belongs to the histone H2B family.</text>
</comment>
<evidence type="ECO:0000250" key="1"/>
<evidence type="ECO:0000256" key="2">
    <source>
        <dbReference type="SAM" id="MobiDB-lite"/>
    </source>
</evidence>
<evidence type="ECO:0000269" key="3">
    <source>
    </source>
</evidence>
<evidence type="ECO:0000305" key="4"/>
<evidence type="ECO:0007829" key="5">
    <source>
        <dbReference type="PDB" id="6K00"/>
    </source>
</evidence>
<sequence length="122" mass="13501">MPPKPSAKGAKKAAKTVTKPKDGKKRRHARKESYSVYIYRVLKQVHPDTGVSSKAMSIMNSFVNDVFERIAAEASRLAHYNKRSTISSREIQTAVRLILPGELAKHAVSEGTKAVTKYTSSK</sequence>
<organism>
    <name type="scientific">Caenorhabditis elegans</name>
    <dbReference type="NCBI Taxonomy" id="6239"/>
    <lineage>
        <taxon>Eukaryota</taxon>
        <taxon>Metazoa</taxon>
        <taxon>Ecdysozoa</taxon>
        <taxon>Nematoda</taxon>
        <taxon>Chromadorea</taxon>
        <taxon>Rhabditida</taxon>
        <taxon>Rhabditina</taxon>
        <taxon>Rhabditomorpha</taxon>
        <taxon>Rhabditoidea</taxon>
        <taxon>Rhabditidae</taxon>
        <taxon>Peloderinae</taxon>
        <taxon>Caenorhabditis</taxon>
    </lineage>
</organism>
<proteinExistence type="evidence at protein level"/>
<name>H2B1_CAEEL</name>
<accession>P04255</accession>
<accession>O02656</accession>
<protein>
    <recommendedName>
        <fullName>Histone H2B 1</fullName>
    </recommendedName>
</protein>
<keyword id="KW-0002">3D-structure</keyword>
<keyword id="KW-0158">Chromosome</keyword>
<keyword id="KW-0903">Direct protein sequencing</keyword>
<keyword id="KW-0238">DNA-binding</keyword>
<keyword id="KW-0325">Glycoprotein</keyword>
<keyword id="KW-1017">Isopeptide bond</keyword>
<keyword id="KW-0544">Nucleosome core</keyword>
<keyword id="KW-0539">Nucleus</keyword>
<keyword id="KW-1185">Reference proteome</keyword>
<keyword id="KW-0832">Ubl conjugation</keyword>
<feature type="initiator methionine" description="Removed" evidence="3">
    <location>
        <position position="1"/>
    </location>
</feature>
<feature type="chain" id="PRO_0000071867" description="Histone H2B 1">
    <location>
        <begin position="2"/>
        <end position="122"/>
    </location>
</feature>
<feature type="region of interest" description="Disordered" evidence="2">
    <location>
        <begin position="1"/>
        <end position="30"/>
    </location>
</feature>
<feature type="glycosylation site" description="O-linked (GlcNAc) serine" evidence="1">
    <location>
        <position position="109"/>
    </location>
</feature>
<feature type="cross-link" description="Glycyl lysine isopeptide (Lys-Gly) (interchain with G-Cter in ubiquitin)" evidence="1">
    <location>
        <position position="117"/>
    </location>
</feature>
<feature type="sequence conflict" description="In Ref. 3; AA sequence and 4; AA sequence." evidence="4" ref="3 4">
    <original>RH</original>
    <variation>KK</variation>
    <location>
        <begin position="27"/>
        <end position="28"/>
    </location>
</feature>
<feature type="helix" evidence="5">
    <location>
        <begin position="35"/>
        <end position="45"/>
    </location>
</feature>
<feature type="helix" evidence="5">
    <location>
        <begin position="53"/>
        <end position="78"/>
    </location>
</feature>
<feature type="strand" evidence="5">
    <location>
        <begin position="81"/>
        <end position="83"/>
    </location>
</feature>
<feature type="helix" evidence="5">
    <location>
        <begin position="88"/>
        <end position="98"/>
    </location>
</feature>
<feature type="helix" evidence="5">
    <location>
        <begin position="101"/>
        <end position="119"/>
    </location>
</feature>
<dbReference type="EMBL" id="X15633">
    <property type="protein sequence ID" value="CAA33642.1"/>
    <property type="molecule type" value="Genomic_DNA"/>
</dbReference>
<dbReference type="EMBL" id="FO081169">
    <property type="protein sequence ID" value="CCD69642.1"/>
    <property type="molecule type" value="Genomic_DNA"/>
</dbReference>
<dbReference type="EMBL" id="Z81495">
    <property type="protein sequence ID" value="CAB04061.1"/>
    <property type="molecule type" value="Genomic_DNA"/>
</dbReference>
<dbReference type="EMBL" id="Z83245">
    <property type="protein sequence ID" value="CAB05830.1"/>
    <property type="molecule type" value="Genomic_DNA"/>
</dbReference>
<dbReference type="EMBL" id="Z83245">
    <property type="protein sequence ID" value="CAB05832.1"/>
    <property type="molecule type" value="Genomic_DNA"/>
</dbReference>
<dbReference type="EMBL" id="FO081018">
    <property type="protein sequence ID" value="CCD68530.1"/>
    <property type="molecule type" value="Genomic_DNA"/>
</dbReference>
<dbReference type="PIR" id="D88357">
    <property type="entry name" value="D88357"/>
</dbReference>
<dbReference type="PIR" id="D88753">
    <property type="entry name" value="D88753"/>
</dbReference>
<dbReference type="RefSeq" id="NP_496888.1">
    <property type="nucleotide sequence ID" value="NM_064487.1"/>
</dbReference>
<dbReference type="RefSeq" id="NP_496892.1">
    <property type="nucleotide sequence ID" value="NM_064491.8"/>
</dbReference>
<dbReference type="RefSeq" id="NP_496897.1">
    <property type="nucleotide sequence ID" value="NM_064496.1"/>
</dbReference>
<dbReference type="RefSeq" id="NP_501403.1">
    <property type="nucleotide sequence ID" value="NM_069002.1"/>
</dbReference>
<dbReference type="RefSeq" id="NP_501409.1">
    <property type="nucleotide sequence ID" value="NM_069008.1"/>
</dbReference>
<dbReference type="PDB" id="6K00">
    <property type="method" value="X-ray"/>
    <property type="resolution" value="2.20 A"/>
    <property type="chains" value="D=30-122"/>
</dbReference>
<dbReference type="PDB" id="6K03">
    <property type="method" value="X-ray"/>
    <property type="resolution" value="2.86 A"/>
    <property type="chains" value="D=30-122"/>
</dbReference>
<dbReference type="PDB" id="6K09">
    <property type="method" value="X-ray"/>
    <property type="resolution" value="2.25 A"/>
    <property type="chains" value="D=30-122"/>
</dbReference>
<dbReference type="PDBsum" id="6K00"/>
<dbReference type="PDBsum" id="6K03"/>
<dbReference type="PDBsum" id="6K09"/>
<dbReference type="SMR" id="P04255"/>
<dbReference type="BioGRID" id="40312">
    <property type="interactions" value="2"/>
</dbReference>
<dbReference type="BioGRID" id="40315">
    <property type="interactions" value="3"/>
</dbReference>
<dbReference type="BioGRID" id="40319">
    <property type="interactions" value="1"/>
</dbReference>
<dbReference type="BioGRID" id="50107">
    <property type="interactions" value="1"/>
</dbReference>
<dbReference type="BioGRID" id="56179">
    <property type="interactions" value="2"/>
</dbReference>
<dbReference type="FunCoup" id="P04255">
    <property type="interactions" value="555"/>
</dbReference>
<dbReference type="STRING" id="6239.F08G2.1.1"/>
<dbReference type="GlyCosmos" id="P04255">
    <property type="glycosylation" value="1 site, No reported glycans"/>
</dbReference>
<dbReference type="PaxDb" id="6239-F08G2.1"/>
<dbReference type="PeptideAtlas" id="P04255"/>
<dbReference type="EnsemblMetazoa" id="F08G2.1.1">
    <property type="protein sequence ID" value="F08G2.1.1"/>
    <property type="gene ID" value="WBGene00001918"/>
</dbReference>
<dbReference type="EnsemblMetazoa" id="F17E9.9.1">
    <property type="protein sequence ID" value="F17E9.9.1"/>
    <property type="gene ID" value="WBGene00001908"/>
</dbReference>
<dbReference type="EnsemblMetazoa" id="F35H10.11.1">
    <property type="protein sequence ID" value="F35H10.11.1"/>
    <property type="gene ID" value="WBGene00001903"/>
</dbReference>
<dbReference type="EnsemblMetazoa" id="ZK131.5.1">
    <property type="protein sequence ID" value="ZK131.5.1"/>
    <property type="gene ID" value="WBGene00001885"/>
</dbReference>
<dbReference type="EnsemblMetazoa" id="ZK131.9.1">
    <property type="protein sequence ID" value="ZK131.9.1"/>
    <property type="gene ID" value="WBGene00001889"/>
</dbReference>
<dbReference type="GeneID" id="175026"/>
<dbReference type="GeneID" id="175029"/>
<dbReference type="GeneID" id="175033"/>
<dbReference type="GeneID" id="185332"/>
<dbReference type="GeneID" id="191679"/>
<dbReference type="KEGG" id="cel:CELE_F08G2.1"/>
<dbReference type="KEGG" id="cel:CELE_F17E9.9"/>
<dbReference type="KEGG" id="cel:CELE_F35H10.11"/>
<dbReference type="KEGG" id="cel:CELE_ZK131.5"/>
<dbReference type="KEGG" id="cel:CELE_ZK131.9"/>
<dbReference type="UCSC" id="ZK131.9">
    <property type="organism name" value="c. elegans"/>
</dbReference>
<dbReference type="AGR" id="WB:WBGene00001885"/>
<dbReference type="AGR" id="WB:WBGene00001889"/>
<dbReference type="AGR" id="WB:WBGene00001903"/>
<dbReference type="AGR" id="WB:WBGene00001908"/>
<dbReference type="AGR" id="WB:WBGene00001918"/>
<dbReference type="CTD" id="175026"/>
<dbReference type="CTD" id="175029"/>
<dbReference type="CTD" id="175033"/>
<dbReference type="CTD" id="185332"/>
<dbReference type="CTD" id="191679"/>
<dbReference type="WormBase" id="F08G2.1">
    <property type="protein sequence ID" value="CE07075"/>
    <property type="gene ID" value="WBGene00001918"/>
    <property type="gene designation" value="his-44"/>
</dbReference>
<dbReference type="WormBase" id="F17E9.9">
    <property type="protein sequence ID" value="CE07075"/>
    <property type="gene ID" value="WBGene00001908"/>
    <property type="gene designation" value="his-34"/>
</dbReference>
<dbReference type="WormBase" id="F35H10.11">
    <property type="protein sequence ID" value="CE07075"/>
    <property type="gene ID" value="WBGene00001903"/>
    <property type="gene designation" value="his-29"/>
</dbReference>
<dbReference type="WormBase" id="ZK131.5">
    <property type="protein sequence ID" value="CE07075"/>
    <property type="gene ID" value="WBGene00001885"/>
    <property type="gene designation" value="his-11"/>
</dbReference>
<dbReference type="WormBase" id="ZK131.9">
    <property type="protein sequence ID" value="CE07075"/>
    <property type="gene ID" value="WBGene00001889"/>
    <property type="gene designation" value="his-15"/>
</dbReference>
<dbReference type="eggNOG" id="KOG1744">
    <property type="taxonomic scope" value="Eukaryota"/>
</dbReference>
<dbReference type="GeneTree" id="ENSGT01130000278348"/>
<dbReference type="HOGENOM" id="CLU_075666_2_1_1"/>
<dbReference type="InParanoid" id="P04255"/>
<dbReference type="OrthoDB" id="5807605at2759"/>
<dbReference type="PhylomeDB" id="P04255"/>
<dbReference type="PRO" id="PR:P04255"/>
<dbReference type="Proteomes" id="UP000001940">
    <property type="component" value="Chromosome II"/>
</dbReference>
<dbReference type="Proteomes" id="UP000001940">
    <property type="component" value="Chromosome IV"/>
</dbReference>
<dbReference type="Bgee" id="WBGene00001885">
    <property type="expression patterns" value="Expressed in pharyngeal muscle cell (C elegans) and 3 other cell types or tissues"/>
</dbReference>
<dbReference type="GO" id="GO:0000785">
    <property type="term" value="C:chromatin"/>
    <property type="evidence" value="ECO:0000314"/>
    <property type="project" value="WormBase"/>
</dbReference>
<dbReference type="GO" id="GO:0000786">
    <property type="term" value="C:nucleosome"/>
    <property type="evidence" value="ECO:0007669"/>
    <property type="project" value="UniProtKB-KW"/>
</dbReference>
<dbReference type="GO" id="GO:0005634">
    <property type="term" value="C:nucleus"/>
    <property type="evidence" value="ECO:0007669"/>
    <property type="project" value="UniProtKB-SubCell"/>
</dbReference>
<dbReference type="GO" id="GO:0003677">
    <property type="term" value="F:DNA binding"/>
    <property type="evidence" value="ECO:0000318"/>
    <property type="project" value="GO_Central"/>
</dbReference>
<dbReference type="GO" id="GO:0046982">
    <property type="term" value="F:protein heterodimerization activity"/>
    <property type="evidence" value="ECO:0007669"/>
    <property type="project" value="InterPro"/>
</dbReference>
<dbReference type="GO" id="GO:0044877">
    <property type="term" value="F:protein-containing complex binding"/>
    <property type="evidence" value="ECO:0000250"/>
    <property type="project" value="UniProtKB"/>
</dbReference>
<dbReference type="GO" id="GO:0030527">
    <property type="term" value="F:structural constituent of chromatin"/>
    <property type="evidence" value="ECO:0007669"/>
    <property type="project" value="InterPro"/>
</dbReference>
<dbReference type="GO" id="GO:0045087">
    <property type="term" value="P:innate immune response"/>
    <property type="evidence" value="ECO:0000270"/>
    <property type="project" value="WormBase"/>
</dbReference>
<dbReference type="CDD" id="cd22910">
    <property type="entry name" value="HFD_H2B"/>
    <property type="match status" value="1"/>
</dbReference>
<dbReference type="FunFam" id="1.10.20.10:FF:000016">
    <property type="entry name" value="Histone H2B"/>
    <property type="match status" value="1"/>
</dbReference>
<dbReference type="Gene3D" id="1.10.20.10">
    <property type="entry name" value="Histone, subunit A"/>
    <property type="match status" value="1"/>
</dbReference>
<dbReference type="InterPro" id="IPR009072">
    <property type="entry name" value="Histone-fold"/>
</dbReference>
<dbReference type="InterPro" id="IPR007125">
    <property type="entry name" value="Histone_H2A/H2B/H3"/>
</dbReference>
<dbReference type="InterPro" id="IPR000558">
    <property type="entry name" value="Histone_H2B"/>
</dbReference>
<dbReference type="InterPro" id="IPR055333">
    <property type="entry name" value="HISTONE_H2B_site"/>
</dbReference>
<dbReference type="PANTHER" id="PTHR23428">
    <property type="entry name" value="HISTONE H2B"/>
    <property type="match status" value="1"/>
</dbReference>
<dbReference type="Pfam" id="PF00125">
    <property type="entry name" value="Histone"/>
    <property type="match status" value="1"/>
</dbReference>
<dbReference type="PRINTS" id="PR00621">
    <property type="entry name" value="HISTONEH2B"/>
</dbReference>
<dbReference type="SMART" id="SM00427">
    <property type="entry name" value="H2B"/>
    <property type="match status" value="1"/>
</dbReference>
<dbReference type="SUPFAM" id="SSF47113">
    <property type="entry name" value="Histone-fold"/>
    <property type="match status" value="1"/>
</dbReference>
<dbReference type="PROSITE" id="PS00357">
    <property type="entry name" value="HISTONE_H2B"/>
    <property type="match status" value="1"/>
</dbReference>